<name>AHL8_ARATH</name>
<sequence>MDSRDIPPSHNQLQPPPGMLMSHYRNPNAAASPLMVPTSTSQPIQHPRLPFGNQQQSQTFHQQQQQQMDQKTLESLGFGDGSPSSQPMRFGIDDQNQQLQVKKKRGRPRKYTPDGSIALGLAPTSPLLSAASNSYGEGGVGDSGGNGNSVDPPVKRNRGRPPGSSKKQLDALGGTSGVGFTPHVIEVNTGEDIASKVMAFSDQGSRTICILSASGAVSRVMLRQASHSSGIVTYEGRFEIITLSGSVLNYEVNGSTNRSGNLSVALAGPDGGIVGGSVVGNLVAATQVQVIVGSFVAEAKKPKQSSVNIARGQNPEPASAPANMLNFGSVSQGPSSESSEENESGSPAMHRDNNNGIYGAQQQQQQQPLHPHQMQMYQHLWSNHGQ</sequence>
<keyword id="KW-0238">DNA-binding</keyword>
<keyword id="KW-0539">Nucleus</keyword>
<keyword id="KW-1185">Reference proteome</keyword>
<keyword id="KW-0677">Repeat</keyword>
<keyword id="KW-0804">Transcription</keyword>
<keyword id="KW-0805">Transcription regulation</keyword>
<organism>
    <name type="scientific">Arabidopsis thaliana</name>
    <name type="common">Mouse-ear cress</name>
    <dbReference type="NCBI Taxonomy" id="3702"/>
    <lineage>
        <taxon>Eukaryota</taxon>
        <taxon>Viridiplantae</taxon>
        <taxon>Streptophyta</taxon>
        <taxon>Embryophyta</taxon>
        <taxon>Tracheophyta</taxon>
        <taxon>Spermatophyta</taxon>
        <taxon>Magnoliopsida</taxon>
        <taxon>eudicotyledons</taxon>
        <taxon>Gunneridae</taxon>
        <taxon>Pentapetalae</taxon>
        <taxon>rosids</taxon>
        <taxon>malvids</taxon>
        <taxon>Brassicales</taxon>
        <taxon>Brassicaceae</taxon>
        <taxon>Camelineae</taxon>
        <taxon>Arabidopsis</taxon>
    </lineage>
</organism>
<reference key="1">
    <citation type="journal article" date="1998" name="DNA Res.">
        <title>Structural analysis of Arabidopsis thaliana chromosome 5. VIII. Sequence features of the regions of 1,081,958 bp covered by seventeen physically assigned P1 and TAC clones.</title>
        <authorList>
            <person name="Asamizu E."/>
            <person name="Sato S."/>
            <person name="Kaneko T."/>
            <person name="Nakamura Y."/>
            <person name="Kotani H."/>
            <person name="Miyajima N."/>
            <person name="Tabata S."/>
        </authorList>
    </citation>
    <scope>NUCLEOTIDE SEQUENCE [LARGE SCALE GENOMIC DNA]</scope>
    <source>
        <strain>cv. Columbia</strain>
    </source>
</reference>
<reference key="2">
    <citation type="journal article" date="2017" name="Plant J.">
        <title>Araport11: a complete reannotation of the Arabidopsis thaliana reference genome.</title>
        <authorList>
            <person name="Cheng C.Y."/>
            <person name="Krishnakumar V."/>
            <person name="Chan A.P."/>
            <person name="Thibaud-Nissen F."/>
            <person name="Schobel S."/>
            <person name="Town C.D."/>
        </authorList>
    </citation>
    <scope>GENOME REANNOTATION</scope>
    <source>
        <strain>cv. Columbia</strain>
    </source>
</reference>
<reference key="3">
    <citation type="submission" date="2004-09" db="EMBL/GenBank/DDBJ databases">
        <title>Arabidopsis ORF clones.</title>
        <authorList>
            <person name="Shinn P."/>
            <person name="Chen H."/>
            <person name="Cheuk R."/>
            <person name="Kim C.J."/>
            <person name="Ecker J.R."/>
        </authorList>
    </citation>
    <scope>NUCLEOTIDE SEQUENCE [LARGE SCALE MRNA]</scope>
    <source>
        <strain>cv. Columbia</strain>
    </source>
</reference>
<reference key="4">
    <citation type="submission" date="2009-03" db="EMBL/GenBank/DDBJ databases">
        <title>ORF cloning and analysis of Arabidopsis transcription factor genes.</title>
        <authorList>
            <person name="Fujita M."/>
            <person name="Mizukado S."/>
            <person name="Seki M."/>
            <person name="Shinozaki K."/>
            <person name="Mitsuda N."/>
            <person name="Takiguchi Y."/>
            <person name="Takagi M."/>
        </authorList>
    </citation>
    <scope>NUCLEOTIDE SEQUENCE [LARGE SCALE MRNA]</scope>
</reference>
<reference key="5">
    <citation type="journal article" date="2004" name="Plant Mol. Biol.">
        <title>Identification of a novel plant MAR DNA binding protein localized on chromosomal surfaces.</title>
        <authorList>
            <person name="Fujimoto S."/>
            <person name="Matsunaga S."/>
            <person name="Yonemura M."/>
            <person name="Uchiyama S."/>
            <person name="Azuma T."/>
            <person name="Fukui K."/>
        </authorList>
    </citation>
    <scope>IDENTIFICATION</scope>
    <scope>GENE FAMILY</scope>
    <scope>NOMENCLATURE</scope>
    <source>
        <strain>cv. Columbia</strain>
    </source>
</reference>
<reference key="6">
    <citation type="journal article" date="2013" name="Proc. Natl. Acad. Sci. U.S.A.">
        <title>Arabidopsis thaliana AHL family modulates hypocotyl growth redundantly by interacting with each other via the PPC/DUF296 domain.</title>
        <authorList>
            <person name="Zhao J."/>
            <person name="Favero D.S."/>
            <person name="Peng H."/>
            <person name="Neff M.M."/>
        </authorList>
    </citation>
    <scope>GENE FAMILY</scope>
    <scope>DOMAIN PPC</scope>
</reference>
<accession>Q9FIR1</accession>
<protein>
    <recommendedName>
        <fullName evidence="10">AT-hook motif nuclear-localized protein 8</fullName>
    </recommendedName>
</protein>
<gene>
    <name evidence="6" type="primary">AHL8</name>
    <name evidence="8" type="ordered locus">At5g46640</name>
    <name evidence="9" type="ORF">MZA15.3</name>
</gene>
<evidence type="ECO:0000250" key="1">
    <source>
        <dbReference type="UniProtKB" id="Q8VYJ2"/>
    </source>
</evidence>
<evidence type="ECO:0000255" key="2"/>
<evidence type="ECO:0000255" key="3">
    <source>
        <dbReference type="PROSITE-ProRule" id="PRU01078"/>
    </source>
</evidence>
<evidence type="ECO:0000256" key="4">
    <source>
        <dbReference type="SAM" id="MobiDB-lite"/>
    </source>
</evidence>
<evidence type="ECO:0000269" key="5">
    <source>
    </source>
</evidence>
<evidence type="ECO:0000303" key="6">
    <source>
    </source>
</evidence>
<evidence type="ECO:0000305" key="7"/>
<evidence type="ECO:0000312" key="8">
    <source>
        <dbReference type="Araport" id="AT5G46640"/>
    </source>
</evidence>
<evidence type="ECO:0000312" key="9">
    <source>
        <dbReference type="EMBL" id="BAB08908.1"/>
    </source>
</evidence>
<evidence type="ECO:0000312" key="10">
    <source>
        <dbReference type="EMBL" id="FAA00279.1"/>
    </source>
</evidence>
<proteinExistence type="evidence at transcript level"/>
<comment type="function">
    <text evidence="1">Transcription factor that specifically binds AT-rich DNA sequences related to the nuclear matrix attachment regions (MARs).</text>
</comment>
<comment type="subcellular location">
    <subcellularLocation>
        <location evidence="1">Nucleus</location>
    </subcellularLocation>
</comment>
<comment type="domain">
    <text evidence="5">The PPC domain mediates interactions between AHL proteins.</text>
</comment>
<dbReference type="EMBL" id="AB016882">
    <property type="protein sequence ID" value="BAB08908.1"/>
    <property type="molecule type" value="Genomic_DNA"/>
</dbReference>
<dbReference type="EMBL" id="CP002688">
    <property type="protein sequence ID" value="AED95409.1"/>
    <property type="molecule type" value="Genomic_DNA"/>
</dbReference>
<dbReference type="EMBL" id="BT015318">
    <property type="protein sequence ID" value="AAT99797.1"/>
    <property type="molecule type" value="mRNA"/>
</dbReference>
<dbReference type="EMBL" id="BT015755">
    <property type="protein sequence ID" value="AAU84692.1"/>
    <property type="molecule type" value="mRNA"/>
</dbReference>
<dbReference type="EMBL" id="AB493779">
    <property type="protein sequence ID" value="BAH30617.1"/>
    <property type="molecule type" value="mRNA"/>
</dbReference>
<dbReference type="EMBL" id="BR000344">
    <property type="protein sequence ID" value="FAA00279.1"/>
    <property type="molecule type" value="mRNA"/>
</dbReference>
<dbReference type="RefSeq" id="NP_199476.1">
    <property type="nucleotide sequence ID" value="NM_124034.4"/>
</dbReference>
<dbReference type="SMR" id="Q9FIR1"/>
<dbReference type="FunCoup" id="Q9FIR1">
    <property type="interactions" value="8"/>
</dbReference>
<dbReference type="STRING" id="3702.Q9FIR1"/>
<dbReference type="iPTMnet" id="Q9FIR1"/>
<dbReference type="PaxDb" id="3702-AT5G46640.1"/>
<dbReference type="ProteomicsDB" id="244719"/>
<dbReference type="EnsemblPlants" id="AT5G46640.1">
    <property type="protein sequence ID" value="AT5G46640.1"/>
    <property type="gene ID" value="AT5G46640"/>
</dbReference>
<dbReference type="GeneID" id="834707"/>
<dbReference type="Gramene" id="AT5G46640.1">
    <property type="protein sequence ID" value="AT5G46640.1"/>
    <property type="gene ID" value="AT5G46640"/>
</dbReference>
<dbReference type="KEGG" id="ath:AT5G46640"/>
<dbReference type="Araport" id="AT5G46640"/>
<dbReference type="TAIR" id="AT5G46640">
    <property type="gene designation" value="AHL8"/>
</dbReference>
<dbReference type="eggNOG" id="ENOG502R1P2">
    <property type="taxonomic scope" value="Eukaryota"/>
</dbReference>
<dbReference type="HOGENOM" id="CLU_039808_7_2_1"/>
<dbReference type="InParanoid" id="Q9FIR1"/>
<dbReference type="OMA" id="IPTHSAN"/>
<dbReference type="PhylomeDB" id="Q9FIR1"/>
<dbReference type="PRO" id="PR:Q9FIR1"/>
<dbReference type="Proteomes" id="UP000006548">
    <property type="component" value="Chromosome 5"/>
</dbReference>
<dbReference type="ExpressionAtlas" id="Q9FIR1">
    <property type="expression patterns" value="baseline and differential"/>
</dbReference>
<dbReference type="GO" id="GO:0005634">
    <property type="term" value="C:nucleus"/>
    <property type="evidence" value="ECO:0007669"/>
    <property type="project" value="UniProtKB-SubCell"/>
</dbReference>
<dbReference type="GO" id="GO:0003680">
    <property type="term" value="F:minor groove of adenine-thymine-rich DNA binding"/>
    <property type="evidence" value="ECO:0007669"/>
    <property type="project" value="InterPro"/>
</dbReference>
<dbReference type="CDD" id="cd11378">
    <property type="entry name" value="DUF296"/>
    <property type="match status" value="1"/>
</dbReference>
<dbReference type="Gene3D" id="3.30.1330.80">
    <property type="entry name" value="Hypothetical protein, similar to alpha- acetolactate decarboxylase, domain 2"/>
    <property type="match status" value="1"/>
</dbReference>
<dbReference type="InterPro" id="IPR039605">
    <property type="entry name" value="AHL"/>
</dbReference>
<dbReference type="InterPro" id="IPR017956">
    <property type="entry name" value="AT_hook_DNA-bd_motif"/>
</dbReference>
<dbReference type="InterPro" id="IPR005175">
    <property type="entry name" value="PPC_dom"/>
</dbReference>
<dbReference type="PANTHER" id="PTHR31500:SF51">
    <property type="entry name" value="AT-HOOK MOTIF NUCLEAR-LOCALIZED PROTEIN 8"/>
    <property type="match status" value="1"/>
</dbReference>
<dbReference type="PANTHER" id="PTHR31500">
    <property type="entry name" value="AT-HOOK MOTIF NUCLEAR-LOCALIZED PROTEIN 9"/>
    <property type="match status" value="1"/>
</dbReference>
<dbReference type="Pfam" id="PF03479">
    <property type="entry name" value="PCC"/>
    <property type="match status" value="1"/>
</dbReference>
<dbReference type="SMART" id="SM00384">
    <property type="entry name" value="AT_hook"/>
    <property type="match status" value="2"/>
</dbReference>
<dbReference type="SUPFAM" id="SSF117856">
    <property type="entry name" value="AF0104/ALDC/Ptd012-like"/>
    <property type="match status" value="1"/>
</dbReference>
<dbReference type="PROSITE" id="PS51742">
    <property type="entry name" value="PPC"/>
    <property type="match status" value="1"/>
</dbReference>
<feature type="chain" id="PRO_0000432026" description="AT-hook motif nuclear-localized protein 8">
    <location>
        <begin position="1"/>
        <end position="386"/>
    </location>
</feature>
<feature type="domain" description="PPC" evidence="3">
    <location>
        <begin position="174"/>
        <end position="316"/>
    </location>
</feature>
<feature type="DNA-binding region" description="A.T hook 1" evidence="2">
    <location>
        <begin position="102"/>
        <end position="114"/>
    </location>
</feature>
<feature type="DNA-binding region" description="A.T hook 2" evidence="2">
    <location>
        <begin position="155"/>
        <end position="167"/>
    </location>
</feature>
<feature type="region of interest" description="Disordered" evidence="4">
    <location>
        <begin position="1"/>
        <end position="175"/>
    </location>
</feature>
<feature type="region of interest" description="Disordered" evidence="4">
    <location>
        <begin position="303"/>
        <end position="372"/>
    </location>
</feature>
<feature type="short sequence motif" description="Bipartite nuclear localization signal" evidence="7">
    <location>
        <begin position="102"/>
        <end position="110"/>
    </location>
</feature>
<feature type="compositionally biased region" description="Low complexity" evidence="4">
    <location>
        <begin position="54"/>
        <end position="70"/>
    </location>
</feature>
<feature type="compositionally biased region" description="Basic residues" evidence="4">
    <location>
        <begin position="101"/>
        <end position="110"/>
    </location>
</feature>
<feature type="compositionally biased region" description="Polar residues" evidence="4">
    <location>
        <begin position="126"/>
        <end position="135"/>
    </location>
</feature>
<feature type="compositionally biased region" description="Gly residues" evidence="4">
    <location>
        <begin position="136"/>
        <end position="147"/>
    </location>
</feature>
<feature type="compositionally biased region" description="Low complexity" evidence="4">
    <location>
        <begin position="328"/>
        <end position="337"/>
    </location>
</feature>
<feature type="compositionally biased region" description="Low complexity" evidence="4">
    <location>
        <begin position="361"/>
        <end position="372"/>
    </location>
</feature>